<reference key="1">
    <citation type="journal article" date="2006" name="BMC Genomics">
        <title>The genome of the square archaeon Haloquadratum walsbyi: life at the limits of water activity.</title>
        <authorList>
            <person name="Bolhuis H."/>
            <person name="Palm P."/>
            <person name="Wende A."/>
            <person name="Falb M."/>
            <person name="Rampp M."/>
            <person name="Rodriguez-Valera F."/>
            <person name="Pfeiffer F."/>
            <person name="Oesterhelt D."/>
        </authorList>
    </citation>
    <scope>NUCLEOTIDE SEQUENCE [LARGE SCALE GENOMIC DNA]</scope>
    <source>
        <strain>DSM 16790 / HBSQ001</strain>
    </source>
</reference>
<feature type="chain" id="PRO_0000319462" description="Imidazole glycerol phosphate synthase subunit HisF">
    <location>
        <begin position="1"/>
        <end position="270"/>
    </location>
</feature>
<feature type="active site" evidence="1">
    <location>
        <position position="11"/>
    </location>
</feature>
<feature type="active site" evidence="1">
    <location>
        <position position="135"/>
    </location>
</feature>
<proteinExistence type="inferred from homology"/>
<evidence type="ECO:0000255" key="1">
    <source>
        <dbReference type="HAMAP-Rule" id="MF_01013"/>
    </source>
</evidence>
<gene>
    <name evidence="1" type="primary">hisF</name>
    <name type="ordered locus">HQ_1695A</name>
</gene>
<keyword id="KW-0028">Amino-acid biosynthesis</keyword>
<keyword id="KW-0963">Cytoplasm</keyword>
<keyword id="KW-0368">Histidine biosynthesis</keyword>
<keyword id="KW-0456">Lyase</keyword>
<keyword id="KW-1185">Reference proteome</keyword>
<organism>
    <name type="scientific">Haloquadratum walsbyi (strain DSM 16790 / HBSQ001)</name>
    <dbReference type="NCBI Taxonomy" id="362976"/>
    <lineage>
        <taxon>Archaea</taxon>
        <taxon>Methanobacteriati</taxon>
        <taxon>Methanobacteriota</taxon>
        <taxon>Stenosarchaea group</taxon>
        <taxon>Halobacteria</taxon>
        <taxon>Halobacteriales</taxon>
        <taxon>Haloferacaceae</taxon>
        <taxon>Haloquadratum</taxon>
    </lineage>
</organism>
<dbReference type="EC" id="4.3.2.10" evidence="1"/>
<dbReference type="EMBL" id="AM180088">
    <property type="protein sequence ID" value="CAJ51823.1"/>
    <property type="molecule type" value="Genomic_DNA"/>
</dbReference>
<dbReference type="RefSeq" id="WP_011570973.1">
    <property type="nucleotide sequence ID" value="NC_008212.1"/>
</dbReference>
<dbReference type="SMR" id="Q18JI3"/>
<dbReference type="STRING" id="362976.HQ_1695A"/>
<dbReference type="GeneID" id="4194120"/>
<dbReference type="KEGG" id="hwa:HQ_1695A"/>
<dbReference type="eggNOG" id="arCOG00617">
    <property type="taxonomic scope" value="Archaea"/>
</dbReference>
<dbReference type="HOGENOM" id="CLU_048577_4_0_2"/>
<dbReference type="UniPathway" id="UPA00031">
    <property type="reaction ID" value="UER00010"/>
</dbReference>
<dbReference type="Proteomes" id="UP000001975">
    <property type="component" value="Chromosome"/>
</dbReference>
<dbReference type="GO" id="GO:0005737">
    <property type="term" value="C:cytoplasm"/>
    <property type="evidence" value="ECO:0007669"/>
    <property type="project" value="UniProtKB-SubCell"/>
</dbReference>
<dbReference type="GO" id="GO:0000107">
    <property type="term" value="F:imidazoleglycerol-phosphate synthase activity"/>
    <property type="evidence" value="ECO:0007669"/>
    <property type="project" value="UniProtKB-UniRule"/>
</dbReference>
<dbReference type="GO" id="GO:0016829">
    <property type="term" value="F:lyase activity"/>
    <property type="evidence" value="ECO:0007669"/>
    <property type="project" value="UniProtKB-KW"/>
</dbReference>
<dbReference type="GO" id="GO:0000105">
    <property type="term" value="P:L-histidine biosynthetic process"/>
    <property type="evidence" value="ECO:0007669"/>
    <property type="project" value="UniProtKB-UniRule"/>
</dbReference>
<dbReference type="CDD" id="cd04731">
    <property type="entry name" value="HisF"/>
    <property type="match status" value="1"/>
</dbReference>
<dbReference type="Gene3D" id="3.20.20.70">
    <property type="entry name" value="Aldolase class I"/>
    <property type="match status" value="1"/>
</dbReference>
<dbReference type="HAMAP" id="MF_01013">
    <property type="entry name" value="HisF"/>
    <property type="match status" value="1"/>
</dbReference>
<dbReference type="InterPro" id="IPR013785">
    <property type="entry name" value="Aldolase_TIM"/>
</dbReference>
<dbReference type="InterPro" id="IPR006062">
    <property type="entry name" value="His_biosynth"/>
</dbReference>
<dbReference type="InterPro" id="IPR004651">
    <property type="entry name" value="HisF"/>
</dbReference>
<dbReference type="InterPro" id="IPR050064">
    <property type="entry name" value="IGPS_HisA/HisF"/>
</dbReference>
<dbReference type="InterPro" id="IPR011060">
    <property type="entry name" value="RibuloseP-bd_barrel"/>
</dbReference>
<dbReference type="NCBIfam" id="TIGR00735">
    <property type="entry name" value="hisF"/>
    <property type="match status" value="1"/>
</dbReference>
<dbReference type="PANTHER" id="PTHR21235:SF2">
    <property type="entry name" value="IMIDAZOLE GLYCEROL PHOSPHATE SYNTHASE HISHF"/>
    <property type="match status" value="1"/>
</dbReference>
<dbReference type="PANTHER" id="PTHR21235">
    <property type="entry name" value="IMIDAZOLE GLYCEROL PHOSPHATE SYNTHASE SUBUNIT HISF/H IGP SYNTHASE SUBUNIT HISF/H"/>
    <property type="match status" value="1"/>
</dbReference>
<dbReference type="Pfam" id="PF00977">
    <property type="entry name" value="His_biosynth"/>
    <property type="match status" value="1"/>
</dbReference>
<dbReference type="SUPFAM" id="SSF51366">
    <property type="entry name" value="Ribulose-phoshate binding barrel"/>
    <property type="match status" value="1"/>
</dbReference>
<sequence>MLTKRIIPCIDVDLDEDGNPAVYTGINFEDLEYTGDPVEMAKQYNMAGADEFVFLDITASAVGRETMLETVSRVADEIFIPLTVGGGIRTRDDIKSTLRAGADKVSINTAALETPELITTGASAFGSQCIVISVDARRRFDEQGENYLSVDGESCWFECTVKGGREGTGIDVLEWVTEAETRGAGELFINSIDADGTQDGYDIPLTSAVCDAVSTPVIASSGCGSPADMHEVFTEAGADAGLAASIFHFGEYSIEATKEYLDERGVPIRT</sequence>
<accession>Q18JI3</accession>
<protein>
    <recommendedName>
        <fullName evidence="1">Imidazole glycerol phosphate synthase subunit HisF</fullName>
        <ecNumber evidence="1">4.3.2.10</ecNumber>
    </recommendedName>
    <alternativeName>
        <fullName evidence="1">IGP synthase cyclase subunit</fullName>
    </alternativeName>
    <alternativeName>
        <fullName evidence="1">IGP synthase subunit HisF</fullName>
    </alternativeName>
    <alternativeName>
        <fullName evidence="1">ImGP synthase subunit HisF</fullName>
        <shortName evidence="1">IGPS subunit HisF</shortName>
    </alternativeName>
</protein>
<name>HIS6_HALWD</name>
<comment type="function">
    <text evidence="1">IGPS catalyzes the conversion of PRFAR and glutamine to IGP, AICAR and glutamate. The HisF subunit catalyzes the cyclization activity that produces IGP and AICAR from PRFAR using the ammonia provided by the HisH subunit.</text>
</comment>
<comment type="catalytic activity">
    <reaction evidence="1">
        <text>5-[(5-phospho-1-deoxy-D-ribulos-1-ylimino)methylamino]-1-(5-phospho-beta-D-ribosyl)imidazole-4-carboxamide + L-glutamine = D-erythro-1-(imidazol-4-yl)glycerol 3-phosphate + 5-amino-1-(5-phospho-beta-D-ribosyl)imidazole-4-carboxamide + L-glutamate + H(+)</text>
        <dbReference type="Rhea" id="RHEA:24793"/>
        <dbReference type="ChEBI" id="CHEBI:15378"/>
        <dbReference type="ChEBI" id="CHEBI:29985"/>
        <dbReference type="ChEBI" id="CHEBI:58278"/>
        <dbReference type="ChEBI" id="CHEBI:58359"/>
        <dbReference type="ChEBI" id="CHEBI:58475"/>
        <dbReference type="ChEBI" id="CHEBI:58525"/>
        <dbReference type="EC" id="4.3.2.10"/>
    </reaction>
</comment>
<comment type="pathway">
    <text evidence="1">Amino-acid biosynthesis; L-histidine biosynthesis; L-histidine from 5-phospho-alpha-D-ribose 1-diphosphate: step 5/9.</text>
</comment>
<comment type="subunit">
    <text evidence="1">Heterodimer of HisH and HisF.</text>
</comment>
<comment type="subcellular location">
    <subcellularLocation>
        <location evidence="1">Cytoplasm</location>
    </subcellularLocation>
</comment>
<comment type="similarity">
    <text evidence="1">Belongs to the HisA/HisF family.</text>
</comment>